<feature type="chain" id="PRO_0000057181" description="Ribonuclease pancreatic">
    <location>
        <begin position="1"/>
        <end position="124"/>
    </location>
</feature>
<feature type="region of interest" description="Disordered" evidence="3">
    <location>
        <begin position="1"/>
        <end position="22"/>
    </location>
</feature>
<feature type="compositionally biased region" description="Basic and acidic residues" evidence="3">
    <location>
        <begin position="1"/>
        <end position="13"/>
    </location>
</feature>
<feature type="active site" description="Proton acceptor" evidence="1">
    <location>
        <position position="12"/>
    </location>
</feature>
<feature type="active site" description="Proton donor" evidence="1">
    <location>
        <position position="119"/>
    </location>
</feature>
<feature type="binding site" evidence="1">
    <location>
        <position position="7"/>
    </location>
    <ligand>
        <name>substrate</name>
    </ligand>
</feature>
<feature type="binding site" evidence="1">
    <location>
        <position position="10"/>
    </location>
    <ligand>
        <name>substrate</name>
    </ligand>
</feature>
<feature type="binding site" evidence="1">
    <location>
        <begin position="41"/>
        <end position="45"/>
    </location>
    <ligand>
        <name>substrate</name>
    </ligand>
</feature>
<feature type="binding site" evidence="1">
    <location>
        <position position="66"/>
    </location>
    <ligand>
        <name>substrate</name>
    </ligand>
</feature>
<feature type="binding site" evidence="1">
    <location>
        <position position="85"/>
    </location>
    <ligand>
        <name>substrate</name>
    </ligand>
</feature>
<feature type="glycosylation site" description="N-linked (GlcNAc...) asparagine" evidence="2">
    <location>
        <position position="34"/>
    </location>
</feature>
<feature type="disulfide bond" evidence="1">
    <location>
        <begin position="26"/>
        <end position="84"/>
    </location>
</feature>
<feature type="disulfide bond" evidence="1">
    <location>
        <begin position="40"/>
        <end position="95"/>
    </location>
</feature>
<feature type="disulfide bond" evidence="1">
    <location>
        <begin position="58"/>
        <end position="110"/>
    </location>
</feature>
<feature type="disulfide bond" evidence="1">
    <location>
        <begin position="65"/>
        <end position="72"/>
    </location>
</feature>
<feature type="helix" evidence="5">
    <location>
        <begin position="4"/>
        <end position="12"/>
    </location>
</feature>
<feature type="helix" evidence="5">
    <location>
        <begin position="25"/>
        <end position="32"/>
    </location>
</feature>
<feature type="strand" evidence="5">
    <location>
        <begin position="35"/>
        <end position="39"/>
    </location>
</feature>
<feature type="strand" evidence="5">
    <location>
        <begin position="42"/>
        <end position="47"/>
    </location>
</feature>
<feature type="helix" evidence="5">
    <location>
        <begin position="51"/>
        <end position="55"/>
    </location>
</feature>
<feature type="helix" evidence="5">
    <location>
        <begin position="56"/>
        <end position="59"/>
    </location>
</feature>
<feature type="strand" evidence="5">
    <location>
        <begin position="60"/>
        <end position="63"/>
    </location>
</feature>
<feature type="strand" evidence="5">
    <location>
        <begin position="72"/>
        <end position="74"/>
    </location>
</feature>
<feature type="strand" evidence="5">
    <location>
        <begin position="79"/>
        <end position="86"/>
    </location>
</feature>
<feature type="strand" evidence="5">
    <location>
        <begin position="97"/>
        <end position="104"/>
    </location>
</feature>
<feature type="strand" evidence="5">
    <location>
        <begin position="106"/>
        <end position="111"/>
    </location>
</feature>
<feature type="strand" evidence="5">
    <location>
        <begin position="116"/>
        <end position="123"/>
    </location>
</feature>
<accession>P61824</accession>
<accession>P00656</accession>
<accession>Q9TSF2</accession>
<reference key="1">
    <citation type="journal article" date="1976" name="Int. J. Pept. Protein Res.">
        <title>Studies on the primary structure of bison pancreatic ribonuclease.</title>
        <authorList>
            <person name="Muskiet F.A.J."/>
            <person name="Welling G.W."/>
            <person name="Beintema J.J."/>
        </authorList>
    </citation>
    <scope>PROTEIN SEQUENCE</scope>
    <source>
        <tissue>Pancreas</tissue>
    </source>
</reference>
<name>RNAS1_BISBI</name>
<dbReference type="EC" id="4.6.1.18"/>
<dbReference type="PDB" id="6QMN">
    <property type="method" value="X-ray"/>
    <property type="resolution" value="2.31 A"/>
    <property type="chains" value="A/B/C=1-124"/>
</dbReference>
<dbReference type="PDB" id="9EO5">
    <property type="method" value="X-ray"/>
    <property type="resolution" value="1.99 A"/>
    <property type="chains" value="AAA/BBB=1-124"/>
</dbReference>
<dbReference type="PDB" id="9EO8">
    <property type="method" value="X-ray"/>
    <property type="resolution" value="1.76 A"/>
    <property type="chains" value="AAA/BBB=1-124"/>
</dbReference>
<dbReference type="PDBsum" id="6QMN"/>
<dbReference type="PDBsum" id="9EO5"/>
<dbReference type="PDBsum" id="9EO8"/>
<dbReference type="BMRB" id="P61824"/>
<dbReference type="SMR" id="P61824"/>
<dbReference type="GlyCosmos" id="P61824">
    <property type="glycosylation" value="1 site, No reported glycans"/>
</dbReference>
<dbReference type="GO" id="GO:0005576">
    <property type="term" value="C:extracellular region"/>
    <property type="evidence" value="ECO:0007669"/>
    <property type="project" value="UniProtKB-SubCell"/>
</dbReference>
<dbReference type="GO" id="GO:0016829">
    <property type="term" value="F:lyase activity"/>
    <property type="evidence" value="ECO:0007669"/>
    <property type="project" value="UniProtKB-KW"/>
</dbReference>
<dbReference type="GO" id="GO:0003676">
    <property type="term" value="F:nucleic acid binding"/>
    <property type="evidence" value="ECO:0007669"/>
    <property type="project" value="InterPro"/>
</dbReference>
<dbReference type="GO" id="GO:0004522">
    <property type="term" value="F:ribonuclease A activity"/>
    <property type="evidence" value="ECO:0007669"/>
    <property type="project" value="UniProtKB-EC"/>
</dbReference>
<dbReference type="GO" id="GO:0050830">
    <property type="term" value="P:defense response to Gram-positive bacterium"/>
    <property type="evidence" value="ECO:0007669"/>
    <property type="project" value="TreeGrafter"/>
</dbReference>
<dbReference type="CDD" id="cd06265">
    <property type="entry name" value="RNase_A_canonical"/>
    <property type="match status" value="1"/>
</dbReference>
<dbReference type="FunFam" id="3.10.130.10:FF:000001">
    <property type="entry name" value="Ribonuclease pancreatic"/>
    <property type="match status" value="1"/>
</dbReference>
<dbReference type="Gene3D" id="3.10.130.10">
    <property type="entry name" value="Ribonuclease A-like domain"/>
    <property type="match status" value="1"/>
</dbReference>
<dbReference type="InterPro" id="IPR001427">
    <property type="entry name" value="RNaseA"/>
</dbReference>
<dbReference type="InterPro" id="IPR036816">
    <property type="entry name" value="RNaseA-like_dom_sf"/>
</dbReference>
<dbReference type="InterPro" id="IPR023411">
    <property type="entry name" value="RNaseA_AS"/>
</dbReference>
<dbReference type="InterPro" id="IPR023412">
    <property type="entry name" value="RNaseA_domain"/>
</dbReference>
<dbReference type="PANTHER" id="PTHR11437">
    <property type="entry name" value="RIBONUCLEASE"/>
    <property type="match status" value="1"/>
</dbReference>
<dbReference type="PANTHER" id="PTHR11437:SF24">
    <property type="entry name" value="RIBONUCLEASE PANCREATIC"/>
    <property type="match status" value="1"/>
</dbReference>
<dbReference type="Pfam" id="PF00074">
    <property type="entry name" value="RnaseA"/>
    <property type="match status" value="1"/>
</dbReference>
<dbReference type="PRINTS" id="PR00794">
    <property type="entry name" value="RIBONUCLEASE"/>
</dbReference>
<dbReference type="SMART" id="SM00092">
    <property type="entry name" value="RNAse_Pc"/>
    <property type="match status" value="1"/>
</dbReference>
<dbReference type="SUPFAM" id="SSF54076">
    <property type="entry name" value="RNase A-like"/>
    <property type="match status" value="1"/>
</dbReference>
<dbReference type="PROSITE" id="PS00127">
    <property type="entry name" value="RNASE_PANCREATIC"/>
    <property type="match status" value="1"/>
</dbReference>
<protein>
    <recommendedName>
        <fullName>Ribonuclease pancreatic</fullName>
        <ecNumber>4.6.1.18</ecNumber>
    </recommendedName>
    <alternativeName>
        <fullName>RNase 1</fullName>
    </alternativeName>
    <alternativeName>
        <fullName>RNase A</fullName>
    </alternativeName>
</protein>
<keyword id="KW-0002">3D-structure</keyword>
<keyword id="KW-0903">Direct protein sequencing</keyword>
<keyword id="KW-1015">Disulfide bond</keyword>
<keyword id="KW-0255">Endonuclease</keyword>
<keyword id="KW-0325">Glycoprotein</keyword>
<keyword id="KW-0378">Hydrolase</keyword>
<keyword id="KW-0456">Lyase</keyword>
<keyword id="KW-0540">Nuclease</keyword>
<keyword id="KW-0964">Secreted</keyword>
<proteinExistence type="evidence at protein level"/>
<sequence>KETAAAKFERQHMDSSTSAASSSNYCNQMMKSRNLTKDRCKPVNTFVHESLADVQAVCSQKNVACKNGQTNCYQSYSTMSITDCRETGSSKYPNCAYKTTQANKHIIVACEGNPYVPVHFDASV</sequence>
<organism>
    <name type="scientific">Bison bison</name>
    <name type="common">American bison</name>
    <name type="synonym">Bos bison</name>
    <dbReference type="NCBI Taxonomy" id="9901"/>
    <lineage>
        <taxon>Eukaryota</taxon>
        <taxon>Metazoa</taxon>
        <taxon>Chordata</taxon>
        <taxon>Craniata</taxon>
        <taxon>Vertebrata</taxon>
        <taxon>Euteleostomi</taxon>
        <taxon>Mammalia</taxon>
        <taxon>Eutheria</taxon>
        <taxon>Laurasiatheria</taxon>
        <taxon>Artiodactyla</taxon>
        <taxon>Ruminantia</taxon>
        <taxon>Pecora</taxon>
        <taxon>Bovidae</taxon>
        <taxon>Bovinae</taxon>
        <taxon>Bison</taxon>
    </lineage>
</organism>
<comment type="function">
    <text evidence="1">Endonuclease that catalyzes the cleavage of RNA on the 3' side of pyrimidine nucleotides. Acts on single-stranded and double-stranded RNA (By similarity).</text>
</comment>
<comment type="catalytic activity">
    <reaction>
        <text>an [RNA] containing cytidine + H2O = an [RNA]-3'-cytidine-3'-phosphate + a 5'-hydroxy-ribonucleotide-3'-[RNA].</text>
        <dbReference type="EC" id="4.6.1.18"/>
    </reaction>
</comment>
<comment type="catalytic activity">
    <reaction>
        <text>an [RNA] containing uridine + H2O = an [RNA]-3'-uridine-3'-phosphate + a 5'-hydroxy-ribonucleotide-3'-[RNA].</text>
        <dbReference type="EC" id="4.6.1.18"/>
    </reaction>
</comment>
<comment type="subunit">
    <text evidence="1">Monomer. Interacts with and forms tight 1:1 complexes with RNH1. Dimerization of two such complexes may occur. Interaction with RNH1 inhibits this protein (By similarity).</text>
</comment>
<comment type="subcellular location">
    <subcellularLocation>
        <location>Secreted</location>
    </subcellularLocation>
</comment>
<comment type="tissue specificity">
    <text>Pancreas.</text>
</comment>
<comment type="similarity">
    <text evidence="4">Belongs to the pancreatic ribonuclease family.</text>
</comment>
<gene>
    <name type="primary">RNASE1</name>
    <name type="synonym">RNS1</name>
</gene>
<evidence type="ECO:0000250" key="1"/>
<evidence type="ECO:0000255" key="2"/>
<evidence type="ECO:0000256" key="3">
    <source>
        <dbReference type="SAM" id="MobiDB-lite"/>
    </source>
</evidence>
<evidence type="ECO:0000305" key="4"/>
<evidence type="ECO:0007829" key="5">
    <source>
        <dbReference type="PDB" id="6QMN"/>
    </source>
</evidence>